<keyword id="KW-0479">Metal-binding</keyword>
<keyword id="KW-0862">Zinc</keyword>
<dbReference type="EMBL" id="CP000681">
    <property type="protein sequence ID" value="ABP77138.1"/>
    <property type="molecule type" value="Genomic_DNA"/>
</dbReference>
<dbReference type="SMR" id="A4YB05"/>
<dbReference type="STRING" id="319224.Sputcn32_3428"/>
<dbReference type="KEGG" id="spc:Sputcn32_3428"/>
<dbReference type="eggNOG" id="COG3024">
    <property type="taxonomic scope" value="Bacteria"/>
</dbReference>
<dbReference type="HOGENOM" id="CLU_178280_1_0_6"/>
<dbReference type="GO" id="GO:0008657">
    <property type="term" value="F:DNA topoisomerase type II (double strand cut, ATP-hydrolyzing) inhibitor activity"/>
    <property type="evidence" value="ECO:0007669"/>
    <property type="project" value="UniProtKB-UniRule"/>
</dbReference>
<dbReference type="GO" id="GO:0008270">
    <property type="term" value="F:zinc ion binding"/>
    <property type="evidence" value="ECO:0007669"/>
    <property type="project" value="UniProtKB-UniRule"/>
</dbReference>
<dbReference type="GO" id="GO:0006355">
    <property type="term" value="P:regulation of DNA-templated transcription"/>
    <property type="evidence" value="ECO:0007669"/>
    <property type="project" value="InterPro"/>
</dbReference>
<dbReference type="Gene3D" id="3.30.50.10">
    <property type="entry name" value="Erythroid Transcription Factor GATA-1, subunit A"/>
    <property type="match status" value="1"/>
</dbReference>
<dbReference type="HAMAP" id="MF_00649">
    <property type="entry name" value="DNA_gyrase_inhibitor_YacG"/>
    <property type="match status" value="1"/>
</dbReference>
<dbReference type="InterPro" id="IPR005584">
    <property type="entry name" value="DNA_gyrase_inhibitor_YacG"/>
</dbReference>
<dbReference type="InterPro" id="IPR013088">
    <property type="entry name" value="Znf_NHR/GATA"/>
</dbReference>
<dbReference type="NCBIfam" id="NF001638">
    <property type="entry name" value="PRK00418.1"/>
    <property type="match status" value="1"/>
</dbReference>
<dbReference type="PANTHER" id="PTHR36150">
    <property type="entry name" value="DNA GYRASE INHIBITOR YACG"/>
    <property type="match status" value="1"/>
</dbReference>
<dbReference type="PANTHER" id="PTHR36150:SF1">
    <property type="entry name" value="DNA GYRASE INHIBITOR YACG"/>
    <property type="match status" value="1"/>
</dbReference>
<dbReference type="Pfam" id="PF03884">
    <property type="entry name" value="YacG"/>
    <property type="match status" value="1"/>
</dbReference>
<dbReference type="SUPFAM" id="SSF57716">
    <property type="entry name" value="Glucocorticoid receptor-like (DNA-binding domain)"/>
    <property type="match status" value="1"/>
</dbReference>
<proteinExistence type="inferred from homology"/>
<accession>A4YB05</accession>
<feature type="chain" id="PRO_1000056992" description="DNA gyrase inhibitor YacG">
    <location>
        <begin position="1"/>
        <end position="69"/>
    </location>
</feature>
<feature type="binding site" evidence="1">
    <location>
        <position position="7"/>
    </location>
    <ligand>
        <name>Zn(2+)</name>
        <dbReference type="ChEBI" id="CHEBI:29105"/>
    </ligand>
</feature>
<feature type="binding site" evidence="1">
    <location>
        <position position="10"/>
    </location>
    <ligand>
        <name>Zn(2+)</name>
        <dbReference type="ChEBI" id="CHEBI:29105"/>
    </ligand>
</feature>
<feature type="binding site" evidence="1">
    <location>
        <position position="26"/>
    </location>
    <ligand>
        <name>Zn(2+)</name>
        <dbReference type="ChEBI" id="CHEBI:29105"/>
    </ligand>
</feature>
<feature type="binding site" evidence="1">
    <location>
        <position position="30"/>
    </location>
    <ligand>
        <name>Zn(2+)</name>
        <dbReference type="ChEBI" id="CHEBI:29105"/>
    </ligand>
</feature>
<organism>
    <name type="scientific">Shewanella putrefaciens (strain CN-32 / ATCC BAA-453)</name>
    <dbReference type="NCBI Taxonomy" id="319224"/>
    <lineage>
        <taxon>Bacteria</taxon>
        <taxon>Pseudomonadati</taxon>
        <taxon>Pseudomonadota</taxon>
        <taxon>Gammaproteobacteria</taxon>
        <taxon>Alteromonadales</taxon>
        <taxon>Shewanellaceae</taxon>
        <taxon>Shewanella</taxon>
    </lineage>
</organism>
<protein>
    <recommendedName>
        <fullName evidence="1">DNA gyrase inhibitor YacG</fullName>
    </recommendedName>
</protein>
<name>YACG_SHEPC</name>
<gene>
    <name evidence="1" type="primary">yacG</name>
    <name type="ordered locus">Sputcn32_3428</name>
</gene>
<evidence type="ECO:0000255" key="1">
    <source>
        <dbReference type="HAMAP-Rule" id="MF_00649"/>
    </source>
</evidence>
<sequence length="69" mass="7951">MPLTVKCPICKTPVEWAPQSEFKPFCSERCKLIDLGDWASEKHAIPVKSEFDLDALDEFDLDEDAFFKE</sequence>
<reference key="1">
    <citation type="submission" date="2007-04" db="EMBL/GenBank/DDBJ databases">
        <title>Complete sequence of Shewanella putrefaciens CN-32.</title>
        <authorList>
            <consortium name="US DOE Joint Genome Institute"/>
            <person name="Copeland A."/>
            <person name="Lucas S."/>
            <person name="Lapidus A."/>
            <person name="Barry K."/>
            <person name="Detter J.C."/>
            <person name="Glavina del Rio T."/>
            <person name="Hammon N."/>
            <person name="Israni S."/>
            <person name="Dalin E."/>
            <person name="Tice H."/>
            <person name="Pitluck S."/>
            <person name="Chain P."/>
            <person name="Malfatti S."/>
            <person name="Shin M."/>
            <person name="Vergez L."/>
            <person name="Schmutz J."/>
            <person name="Larimer F."/>
            <person name="Land M."/>
            <person name="Hauser L."/>
            <person name="Kyrpides N."/>
            <person name="Mikhailova N."/>
            <person name="Romine M.F."/>
            <person name="Fredrickson J."/>
            <person name="Tiedje J."/>
            <person name="Richardson P."/>
        </authorList>
    </citation>
    <scope>NUCLEOTIDE SEQUENCE [LARGE SCALE GENOMIC DNA]</scope>
    <source>
        <strain>CN-32 / ATCC BAA-453</strain>
    </source>
</reference>
<comment type="function">
    <text evidence="1">Inhibits all the catalytic activities of DNA gyrase by preventing its interaction with DNA. Acts by binding directly to the C-terminal domain of GyrB, which probably disrupts DNA binding by the gyrase.</text>
</comment>
<comment type="cofactor">
    <cofactor evidence="1">
        <name>Zn(2+)</name>
        <dbReference type="ChEBI" id="CHEBI:29105"/>
    </cofactor>
    <text evidence="1">Binds 1 zinc ion.</text>
</comment>
<comment type="subunit">
    <text evidence="1">Interacts with GyrB.</text>
</comment>
<comment type="similarity">
    <text evidence="1">Belongs to the DNA gyrase inhibitor YacG family.</text>
</comment>